<keyword id="KW-0963">Cytoplasm</keyword>
<keyword id="KW-0444">Lipid biosynthesis</keyword>
<keyword id="KW-0443">Lipid metabolism</keyword>
<keyword id="KW-0460">Magnesium</keyword>
<keyword id="KW-0479">Metal-binding</keyword>
<keyword id="KW-1185">Reference proteome</keyword>
<keyword id="KW-0808">Transferase</keyword>
<accession>P9WKH1</accession>
<accession>L0TFH9</accession>
<accession>P0A5H8</accession>
<accession>Q50727</accession>
<name>FPPS_MYCTU</name>
<evidence type="ECO:0000250" key="1"/>
<evidence type="ECO:0000250" key="2">
    <source>
        <dbReference type="UniProtKB" id="P14324"/>
    </source>
</evidence>
<evidence type="ECO:0000250" key="3">
    <source>
        <dbReference type="UniProtKB" id="Q12051"/>
    </source>
</evidence>
<evidence type="ECO:0000256" key="4">
    <source>
        <dbReference type="SAM" id="MobiDB-lite"/>
    </source>
</evidence>
<evidence type="ECO:0000269" key="5">
    <source>
    </source>
</evidence>
<evidence type="ECO:0000305" key="6"/>
<organism>
    <name type="scientific">Mycobacterium tuberculosis (strain ATCC 25618 / H37Rv)</name>
    <dbReference type="NCBI Taxonomy" id="83332"/>
    <lineage>
        <taxon>Bacteria</taxon>
        <taxon>Bacillati</taxon>
        <taxon>Actinomycetota</taxon>
        <taxon>Actinomycetes</taxon>
        <taxon>Mycobacteriales</taxon>
        <taxon>Mycobacteriaceae</taxon>
        <taxon>Mycobacterium</taxon>
        <taxon>Mycobacterium tuberculosis complex</taxon>
    </lineage>
</organism>
<feature type="chain" id="PRO_0000123968" description="(2E,6E)-farnesyl diphosphate synthase">
    <location>
        <begin position="1"/>
        <end position="359"/>
    </location>
</feature>
<feature type="region of interest" description="Disordered" evidence="4">
    <location>
        <begin position="1"/>
        <end position="21"/>
    </location>
</feature>
<feature type="short sequence motif" description="DDXXD motif" evidence="6">
    <location>
        <begin position="112"/>
        <end position="116"/>
    </location>
</feature>
<feature type="short sequence motif" description="DDXXD motif" evidence="6">
    <location>
        <begin position="242"/>
        <end position="246"/>
    </location>
</feature>
<feature type="binding site" evidence="2">
    <location>
        <position position="73"/>
    </location>
    <ligand>
        <name>isopentenyl diphosphate</name>
        <dbReference type="ChEBI" id="CHEBI:128769"/>
    </ligand>
</feature>
<feature type="binding site" evidence="2">
    <location>
        <position position="76"/>
    </location>
    <ligand>
        <name>isopentenyl diphosphate</name>
        <dbReference type="ChEBI" id="CHEBI:128769"/>
    </ligand>
</feature>
<feature type="binding site" evidence="3">
    <location>
        <position position="105"/>
    </location>
    <ligand>
        <name>isopentenyl diphosphate</name>
        <dbReference type="ChEBI" id="CHEBI:128769"/>
    </ligand>
</feature>
<feature type="binding site" evidence="2">
    <location>
        <position position="112"/>
    </location>
    <ligand>
        <name>Mg(2+)</name>
        <dbReference type="ChEBI" id="CHEBI:18420"/>
        <label>1</label>
    </ligand>
</feature>
<feature type="binding site" evidence="2">
    <location>
        <position position="112"/>
    </location>
    <ligand>
        <name>Mg(2+)</name>
        <dbReference type="ChEBI" id="CHEBI:18420"/>
        <label>2</label>
    </ligand>
</feature>
<feature type="binding site" evidence="2">
    <location>
        <position position="116"/>
    </location>
    <ligand>
        <name>Mg(2+)</name>
        <dbReference type="ChEBI" id="CHEBI:18420"/>
        <label>1</label>
    </ligand>
</feature>
<feature type="binding site" evidence="2">
    <location>
        <position position="116"/>
    </location>
    <ligand>
        <name>Mg(2+)</name>
        <dbReference type="ChEBI" id="CHEBI:18420"/>
        <label>2</label>
    </ligand>
</feature>
<feature type="binding site" evidence="1">
    <location>
        <position position="121"/>
    </location>
    <ligand>
        <name>(2E)-geranyl diphosphate</name>
        <dbReference type="ChEBI" id="CHEBI:58057"/>
    </ligand>
</feature>
<feature type="binding site" evidence="2">
    <location>
        <position position="122"/>
    </location>
    <ligand>
        <name>isopentenyl diphosphate</name>
        <dbReference type="ChEBI" id="CHEBI:128769"/>
    </ligand>
</feature>
<feature type="binding site" evidence="1">
    <location>
        <position position="201"/>
    </location>
    <ligand>
        <name>(2E)-geranyl diphosphate</name>
        <dbReference type="ChEBI" id="CHEBI:58057"/>
    </ligand>
</feature>
<feature type="binding site" evidence="1">
    <location>
        <position position="202"/>
    </location>
    <ligand>
        <name>(2E)-geranyl diphosphate</name>
        <dbReference type="ChEBI" id="CHEBI:58057"/>
    </ligand>
</feature>
<feature type="binding site" evidence="1">
    <location>
        <position position="239"/>
    </location>
    <ligand>
        <name>(2E)-geranyl diphosphate</name>
        <dbReference type="ChEBI" id="CHEBI:58057"/>
    </ligand>
</feature>
<feature type="binding site" evidence="1">
    <location>
        <position position="256"/>
    </location>
    <ligand>
        <name>(2E)-geranyl diphosphate</name>
        <dbReference type="ChEBI" id="CHEBI:58057"/>
    </ligand>
</feature>
<feature type="binding site" evidence="1">
    <location>
        <position position="266"/>
    </location>
    <ligand>
        <name>(2E)-geranyl diphosphate</name>
        <dbReference type="ChEBI" id="CHEBI:58057"/>
    </ligand>
</feature>
<comment type="function">
    <text evidence="5">Catalyzes the condensation of isopentenyl pyrophosphate (IPP) with geranyl diphosphate (GPP) to yield (2E,6E)-farnesyl diphosphate (E,E-FPP). May be used for squalene and possibly sterol biosynthesis.</text>
</comment>
<comment type="catalytic activity">
    <reaction evidence="5">
        <text>isopentenyl diphosphate + (2E)-geranyl diphosphate = (2E,6E)-farnesyl diphosphate + diphosphate</text>
        <dbReference type="Rhea" id="RHEA:19361"/>
        <dbReference type="ChEBI" id="CHEBI:33019"/>
        <dbReference type="ChEBI" id="CHEBI:58057"/>
        <dbReference type="ChEBI" id="CHEBI:128769"/>
        <dbReference type="ChEBI" id="CHEBI:175763"/>
        <dbReference type="EC" id="2.5.1.10"/>
    </reaction>
    <physiologicalReaction direction="left-to-right" evidence="5">
        <dbReference type="Rhea" id="RHEA:19362"/>
    </physiologicalReaction>
</comment>
<comment type="cofactor">
    <cofactor evidence="5 6">
        <name>Mg(2+)</name>
        <dbReference type="ChEBI" id="CHEBI:18420"/>
    </cofactor>
    <cofactor evidence="5 6">
        <name>Mn(2+)</name>
        <dbReference type="ChEBI" id="CHEBI:29035"/>
    </cofactor>
    <cofactor evidence="5 6">
        <name>Fe(2+)</name>
        <dbReference type="ChEBI" id="CHEBI:29033"/>
    </cofactor>
    <text evidence="5 6">Binds 2 Mg(2+) ions per subunit. Mn(2+) and Fe(2+) ions also support activity.</text>
</comment>
<comment type="activity regulation">
    <text>Dithiothreitol increases the enzyme activity by 2.5-fold.</text>
</comment>
<comment type="biophysicochemical properties">
    <kinetics>
        <KM evidence="5">9.8 uM for IPP (at 37 degrees Celsius and pH 7.9)</KM>
        <KM evidence="5">43 uM for GPP (at 37 degrees Celsius and pH 7.9)</KM>
        <Vmax evidence="5">2.8 pmol/min/mg enzyme with GPP as substrate (at 37 degrees Celsius and pH 7.9)</Vmax>
        <Vmax evidence="5">6.7 pmol/min/mg enzyme with IPP as substrate (at 37 degrees Celsius and pH 7.9)</Vmax>
    </kinetics>
    <phDependence>
        <text evidence="5">Optimum pH is 8.</text>
    </phDependence>
</comment>
<comment type="pathway">
    <text evidence="6">Isoprenoid biosynthesis; farnesyl diphosphate biosynthesis; farnesyl diphosphate from geranyl diphosphate and isopentenyl diphosphate.</text>
</comment>
<comment type="subcellular location">
    <subcellularLocation>
        <location evidence="5">Cytoplasm</location>
    </subcellularLocation>
</comment>
<comment type="miscellaneous">
    <text>This enzyme is unique in that it is the first reported eubacterial E,E-FPP synthase that does not have four amino acids between the aspartate residues of the first aspartate-rich motif (FARM) and that has the features of the archaeal chain length-determining (CLD) region.</text>
</comment>
<comment type="similarity">
    <text evidence="6">Belongs to the FPP/GGPP synthase family.</text>
</comment>
<reference key="1">
    <citation type="journal article" date="1998" name="Nature">
        <title>Deciphering the biology of Mycobacterium tuberculosis from the complete genome sequence.</title>
        <authorList>
            <person name="Cole S.T."/>
            <person name="Brosch R."/>
            <person name="Parkhill J."/>
            <person name="Garnier T."/>
            <person name="Churcher C.M."/>
            <person name="Harris D.E."/>
            <person name="Gordon S.V."/>
            <person name="Eiglmeier K."/>
            <person name="Gas S."/>
            <person name="Barry C.E. III"/>
            <person name="Tekaia F."/>
            <person name="Badcock K."/>
            <person name="Basham D."/>
            <person name="Brown D."/>
            <person name="Chillingworth T."/>
            <person name="Connor R."/>
            <person name="Davies R.M."/>
            <person name="Devlin K."/>
            <person name="Feltwell T."/>
            <person name="Gentles S."/>
            <person name="Hamlin N."/>
            <person name="Holroyd S."/>
            <person name="Hornsby T."/>
            <person name="Jagels K."/>
            <person name="Krogh A."/>
            <person name="McLean J."/>
            <person name="Moule S."/>
            <person name="Murphy L.D."/>
            <person name="Oliver S."/>
            <person name="Osborne J."/>
            <person name="Quail M.A."/>
            <person name="Rajandream M.A."/>
            <person name="Rogers J."/>
            <person name="Rutter S."/>
            <person name="Seeger K."/>
            <person name="Skelton S."/>
            <person name="Squares S."/>
            <person name="Squares R."/>
            <person name="Sulston J.E."/>
            <person name="Taylor K."/>
            <person name="Whitehead S."/>
            <person name="Barrell B.G."/>
        </authorList>
    </citation>
    <scope>NUCLEOTIDE SEQUENCE [LARGE SCALE GENOMIC DNA]</scope>
    <source>
        <strain>ATCC 25618 / H37Rv</strain>
    </source>
</reference>
<reference key="2">
    <citation type="journal article" date="2004" name="J. Lipid Res.">
        <title>Identification of a novel class of omega,E,E-farnesyl diphosphate synthase from Mycobacterium tuberculosis.</title>
        <authorList>
            <person name="Dhiman R.K."/>
            <person name="Schulbach M.C."/>
            <person name="Mahapatra S."/>
            <person name="Baulard A.R."/>
            <person name="Vissa V."/>
            <person name="Brennan P.J."/>
            <person name="Crick D.C."/>
        </authorList>
    </citation>
    <scope>FUNCTION AS A FARNESYL DIPHOSPHATE SYNTHASE</scope>
    <scope>CATALYTIC ACTIVITY</scope>
    <scope>BIOPHYSICOCHEMICAL PROPERTIES</scope>
    <scope>SUBCELLULAR LOCATION</scope>
    <scope>COFACTOR</scope>
</reference>
<reference key="3">
    <citation type="journal article" date="2011" name="Mol. Cell. Proteomics">
        <title>Proteogenomic analysis of Mycobacterium tuberculosis by high resolution mass spectrometry.</title>
        <authorList>
            <person name="Kelkar D.S."/>
            <person name="Kumar D."/>
            <person name="Kumar P."/>
            <person name="Balakrishnan L."/>
            <person name="Muthusamy B."/>
            <person name="Yadav A.K."/>
            <person name="Shrivastava P."/>
            <person name="Marimuthu A."/>
            <person name="Anand S."/>
            <person name="Sundaram H."/>
            <person name="Kingsbury R."/>
            <person name="Harsha H.C."/>
            <person name="Nair B."/>
            <person name="Prasad T.S."/>
            <person name="Chauhan D.S."/>
            <person name="Katoch K."/>
            <person name="Katoch V.M."/>
            <person name="Kumar P."/>
            <person name="Chaerkady R."/>
            <person name="Ramachandran S."/>
            <person name="Dash D."/>
            <person name="Pandey A."/>
        </authorList>
    </citation>
    <scope>IDENTIFICATION BY MASS SPECTROMETRY [LARGE SCALE ANALYSIS]</scope>
    <source>
        <strain>ATCC 25618 / H37Rv</strain>
    </source>
</reference>
<sequence>MRGTDEKYGLPPQPDSDRMTRRTLPVLGLAHELITPTLRQMADRLDPHMRPVVSYHLGWSDERGRPVNNNCGKAIRPALVFVAAEAAGADPHSAIPGAVSVELVHNFSLVHDDLMDRDEHRRHRPTVWALWGDAMALLAGDAMLSLAHEVLLDCDSPHVGAALRAISEATRELIRGQAADTAFESRTDVALDECLKMAEGKTAALMAASAEVGALLAGAPRSVREALVAYGRHIGLAFQLVDDLLGIWGRPEITGKPVYSDLRSRKKTLPVTWTVAHGGSAGRRLAAWLVDETGSQTASDDELAAVAELIECGGGRRWASAEARRHVTQGIDMVARIGIPDRPAAELQDLAHYIVDRQA</sequence>
<dbReference type="EC" id="2.5.1.10" evidence="5"/>
<dbReference type="EMBL" id="AL123456">
    <property type="protein sequence ID" value="CCP46220.1"/>
    <property type="molecule type" value="Genomic_DNA"/>
</dbReference>
<dbReference type="PIR" id="C70735">
    <property type="entry name" value="C70735"/>
</dbReference>
<dbReference type="SMR" id="P9WKH1"/>
<dbReference type="FunCoup" id="P9WKH1">
    <property type="interactions" value="163"/>
</dbReference>
<dbReference type="STRING" id="83332.Rv3398c"/>
<dbReference type="SwissLipids" id="SLP:000001317"/>
<dbReference type="PaxDb" id="83332-Rv3398c"/>
<dbReference type="DNASU" id="887919"/>
<dbReference type="KEGG" id="mtu:Rv3398c"/>
<dbReference type="KEGG" id="mtv:RVBD_3398c"/>
<dbReference type="TubercuList" id="Rv3398c"/>
<dbReference type="eggNOG" id="COG0142">
    <property type="taxonomic scope" value="Bacteria"/>
</dbReference>
<dbReference type="InParanoid" id="P9WKH1"/>
<dbReference type="OrthoDB" id="4497239at2"/>
<dbReference type="PhylomeDB" id="P9WKH1"/>
<dbReference type="BioCyc" id="MetaCyc:G185E-7675-MONOMER"/>
<dbReference type="Proteomes" id="UP000001584">
    <property type="component" value="Chromosome"/>
</dbReference>
<dbReference type="GO" id="GO:0005737">
    <property type="term" value="C:cytoplasm"/>
    <property type="evidence" value="ECO:0007669"/>
    <property type="project" value="UniProtKB-SubCell"/>
</dbReference>
<dbReference type="GO" id="GO:0004337">
    <property type="term" value="F:(2E,6E)-farnesyl diphosphate synthase activity"/>
    <property type="evidence" value="ECO:0007669"/>
    <property type="project" value="UniProtKB-EC"/>
</dbReference>
<dbReference type="GO" id="GO:0004161">
    <property type="term" value="F:dimethylallyltranstransferase activity"/>
    <property type="evidence" value="ECO:0000314"/>
    <property type="project" value="MTBBASE"/>
</dbReference>
<dbReference type="GO" id="GO:0005506">
    <property type="term" value="F:iron ion binding"/>
    <property type="evidence" value="ECO:0000314"/>
    <property type="project" value="MTBBASE"/>
</dbReference>
<dbReference type="GO" id="GO:0000287">
    <property type="term" value="F:magnesium ion binding"/>
    <property type="evidence" value="ECO:0000314"/>
    <property type="project" value="MTBBASE"/>
</dbReference>
<dbReference type="GO" id="GO:0030145">
    <property type="term" value="F:manganese ion binding"/>
    <property type="evidence" value="ECO:0000314"/>
    <property type="project" value="MTBBASE"/>
</dbReference>
<dbReference type="GO" id="GO:0004659">
    <property type="term" value="F:prenyltransferase activity"/>
    <property type="evidence" value="ECO:0000318"/>
    <property type="project" value="GO_Central"/>
</dbReference>
<dbReference type="GO" id="GO:0045337">
    <property type="term" value="P:farnesyl diphosphate biosynthetic process"/>
    <property type="evidence" value="ECO:0000314"/>
    <property type="project" value="MTBBASE"/>
</dbReference>
<dbReference type="GO" id="GO:0033384">
    <property type="term" value="P:geranyl diphosphate biosynthetic process"/>
    <property type="evidence" value="ECO:0000314"/>
    <property type="project" value="MTBBASE"/>
</dbReference>
<dbReference type="GO" id="GO:0033386">
    <property type="term" value="P:geranylgeranyl diphosphate biosynthetic process"/>
    <property type="evidence" value="ECO:0000314"/>
    <property type="project" value="MTBBASE"/>
</dbReference>
<dbReference type="GO" id="GO:0008299">
    <property type="term" value="P:isoprenoid biosynthetic process"/>
    <property type="evidence" value="ECO:0000318"/>
    <property type="project" value="GO_Central"/>
</dbReference>
<dbReference type="CDD" id="cd00685">
    <property type="entry name" value="Trans_IPPS_HT"/>
    <property type="match status" value="1"/>
</dbReference>
<dbReference type="Gene3D" id="1.10.600.10">
    <property type="entry name" value="Farnesyl Diphosphate Synthase"/>
    <property type="match status" value="1"/>
</dbReference>
<dbReference type="InterPro" id="IPR008949">
    <property type="entry name" value="Isoprenoid_synthase_dom_sf"/>
</dbReference>
<dbReference type="InterPro" id="IPR000092">
    <property type="entry name" value="Polyprenyl_synt"/>
</dbReference>
<dbReference type="InterPro" id="IPR033749">
    <property type="entry name" value="Polyprenyl_synt_CS"/>
</dbReference>
<dbReference type="PANTHER" id="PTHR12001:SF71">
    <property type="entry name" value="(2E,6E)-FARNESYL DIPHOSPHATE SYNTHASE"/>
    <property type="match status" value="1"/>
</dbReference>
<dbReference type="PANTHER" id="PTHR12001">
    <property type="entry name" value="GERANYLGERANYL PYROPHOSPHATE SYNTHASE"/>
    <property type="match status" value="1"/>
</dbReference>
<dbReference type="Pfam" id="PF00348">
    <property type="entry name" value="polyprenyl_synt"/>
    <property type="match status" value="1"/>
</dbReference>
<dbReference type="SFLD" id="SFLDS00005">
    <property type="entry name" value="Isoprenoid_Synthase_Type_I"/>
    <property type="match status" value="1"/>
</dbReference>
<dbReference type="SFLD" id="SFLDG01017">
    <property type="entry name" value="Polyprenyl_Transferase_Like"/>
    <property type="match status" value="1"/>
</dbReference>
<dbReference type="SUPFAM" id="SSF48576">
    <property type="entry name" value="Terpenoid synthases"/>
    <property type="match status" value="1"/>
</dbReference>
<dbReference type="PROSITE" id="PS00723">
    <property type="entry name" value="POLYPRENYL_SYNTHASE_1"/>
    <property type="match status" value="1"/>
</dbReference>
<dbReference type="PROSITE" id="PS00444">
    <property type="entry name" value="POLYPRENYL_SYNTHASE_2"/>
    <property type="match status" value="1"/>
</dbReference>
<proteinExistence type="evidence at protein level"/>
<protein>
    <recommendedName>
        <fullName>(2E,6E)-farnesyl diphosphate synthase</fullName>
        <shortName>E,E-FPP synthase</shortName>
        <shortName>FPP synthase</shortName>
        <ecNumber evidence="5">2.5.1.10</ecNumber>
    </recommendedName>
</protein>
<gene>
    <name type="ordered locus">Rv3398c</name>
    <name type="ORF">MTCY78.30</name>
</gene>